<reference key="1">
    <citation type="journal article" date="2005" name="J. Infect. Dis.">
        <title>Genome sequence of a serotype M28 strain of group A Streptococcus: potential new insights into puerperal sepsis and bacterial disease specificity.</title>
        <authorList>
            <person name="Green N.M."/>
            <person name="Zhang S."/>
            <person name="Porcella S.F."/>
            <person name="Nagiec M.J."/>
            <person name="Barbian K.D."/>
            <person name="Beres S.B."/>
            <person name="Lefebvre R.B."/>
            <person name="Musser J.M."/>
        </authorList>
    </citation>
    <scope>NUCLEOTIDE SEQUENCE [LARGE SCALE GENOMIC DNA]</scope>
    <source>
        <strain>MGAS6180</strain>
    </source>
</reference>
<name>YIDD_STRPM</name>
<gene>
    <name type="ordered locus">M28_Spy0300</name>
</gene>
<proteinExistence type="inferred from homology"/>
<keyword id="KW-1003">Cell membrane</keyword>
<keyword id="KW-0472">Membrane</keyword>
<comment type="function">
    <text evidence="1">Could be involved in insertion of integral membrane proteins into the membrane.</text>
</comment>
<comment type="subcellular location">
    <subcellularLocation>
        <location evidence="1">Cell membrane</location>
        <topology evidence="1">Peripheral membrane protein</topology>
        <orientation evidence="1">Cytoplasmic side</orientation>
    </subcellularLocation>
</comment>
<comment type="similarity">
    <text evidence="1">Belongs to the UPF0161 family.</text>
</comment>
<accession>Q48V42</accession>
<sequence length="87" mass="9643">MMKKLLIVSVKAYQKYISPLSPPSCRYKPTCSAYMLTAIEKHGTKGILMGIARILRCHPFVAGGVDPVPEDFSLMRNKNTSKNAEKA</sequence>
<organism>
    <name type="scientific">Streptococcus pyogenes serotype M28 (strain MGAS6180)</name>
    <dbReference type="NCBI Taxonomy" id="319701"/>
    <lineage>
        <taxon>Bacteria</taxon>
        <taxon>Bacillati</taxon>
        <taxon>Bacillota</taxon>
        <taxon>Bacilli</taxon>
        <taxon>Lactobacillales</taxon>
        <taxon>Streptococcaceae</taxon>
        <taxon>Streptococcus</taxon>
    </lineage>
</organism>
<protein>
    <recommendedName>
        <fullName evidence="1">Putative membrane protein insertion efficiency factor</fullName>
    </recommendedName>
</protein>
<evidence type="ECO:0000255" key="1">
    <source>
        <dbReference type="HAMAP-Rule" id="MF_00386"/>
    </source>
</evidence>
<feature type="chain" id="PRO_0000253180" description="Putative membrane protein insertion efficiency factor">
    <location>
        <begin position="1"/>
        <end position="87"/>
    </location>
</feature>
<dbReference type="EMBL" id="CP000056">
    <property type="protein sequence ID" value="AAX71414.1"/>
    <property type="molecule type" value="Genomic_DNA"/>
</dbReference>
<dbReference type="KEGG" id="spb:M28_Spy0300"/>
<dbReference type="HOGENOM" id="CLU_144811_5_2_9"/>
<dbReference type="GO" id="GO:0005886">
    <property type="term" value="C:plasma membrane"/>
    <property type="evidence" value="ECO:0007669"/>
    <property type="project" value="UniProtKB-SubCell"/>
</dbReference>
<dbReference type="HAMAP" id="MF_00386">
    <property type="entry name" value="UPF0161_YidD"/>
    <property type="match status" value="1"/>
</dbReference>
<dbReference type="InterPro" id="IPR002696">
    <property type="entry name" value="Membr_insert_effic_factor_YidD"/>
</dbReference>
<dbReference type="NCBIfam" id="TIGR00278">
    <property type="entry name" value="membrane protein insertion efficiency factor YidD"/>
    <property type="match status" value="1"/>
</dbReference>
<dbReference type="PANTHER" id="PTHR33383">
    <property type="entry name" value="MEMBRANE PROTEIN INSERTION EFFICIENCY FACTOR-RELATED"/>
    <property type="match status" value="1"/>
</dbReference>
<dbReference type="PANTHER" id="PTHR33383:SF1">
    <property type="entry name" value="MEMBRANE PROTEIN INSERTION EFFICIENCY FACTOR-RELATED"/>
    <property type="match status" value="1"/>
</dbReference>
<dbReference type="Pfam" id="PF01809">
    <property type="entry name" value="YidD"/>
    <property type="match status" value="1"/>
</dbReference>
<dbReference type="SMART" id="SM01234">
    <property type="entry name" value="Haemolytic"/>
    <property type="match status" value="1"/>
</dbReference>